<proteinExistence type="inferred from homology"/>
<name>TS57_MYCTO</name>
<protein>
    <recommendedName>
        <fullName>Transposase for insertion sequence element IS1557</fullName>
    </recommendedName>
</protein>
<gene>
    <name type="ordered locus">MT1353</name>
</gene>
<gene>
    <name type="ordered locus">MT3905</name>
</gene>
<comment type="similarity">
    <text evidence="2">Belongs to the transposase 12 family.</text>
</comment>
<feature type="chain" id="PRO_0000427652" description="Transposase for insertion sequence element IS1557">
    <location>
        <begin position="1"/>
        <end position="444"/>
    </location>
</feature>
<feature type="region of interest" description="Disordered" evidence="1">
    <location>
        <begin position="273"/>
        <end position="292"/>
    </location>
</feature>
<feature type="sequence variant" description="In MT1353.">
    <original>L</original>
    <variation>R</variation>
    <location>
        <position position="433"/>
    </location>
</feature>
<reference key="1">
    <citation type="journal article" date="2002" name="J. Bacteriol.">
        <title>Whole-genome comparison of Mycobacterium tuberculosis clinical and laboratory strains.</title>
        <authorList>
            <person name="Fleischmann R.D."/>
            <person name="Alland D."/>
            <person name="Eisen J.A."/>
            <person name="Carpenter L."/>
            <person name="White O."/>
            <person name="Peterson J.D."/>
            <person name="DeBoy R.T."/>
            <person name="Dodson R.J."/>
            <person name="Gwinn M.L."/>
            <person name="Haft D.H."/>
            <person name="Hickey E.K."/>
            <person name="Kolonay J.F."/>
            <person name="Nelson W.C."/>
            <person name="Umayam L.A."/>
            <person name="Ermolaeva M.D."/>
            <person name="Salzberg S.L."/>
            <person name="Delcher A."/>
            <person name="Utterback T.R."/>
            <person name="Weidman J.F."/>
            <person name="Khouri H.M."/>
            <person name="Gill J."/>
            <person name="Mikula A."/>
            <person name="Bishai W."/>
            <person name="Jacobs W.R. Jr."/>
            <person name="Venter J.C."/>
            <person name="Fraser C.M."/>
        </authorList>
    </citation>
    <scope>NUCLEOTIDE SEQUENCE [LARGE SCALE GENOMIC DNA]</scope>
    <source>
        <strain>CDC 1551 / Oshkosh</strain>
    </source>
</reference>
<accession>P9WKH6</accession>
<accession>L0TFA3</accession>
<accession>Q10621</accession>
<keyword id="KW-0233">DNA recombination</keyword>
<keyword id="KW-0238">DNA-binding</keyword>
<keyword id="KW-1185">Reference proteome</keyword>
<keyword id="KW-0814">Transposable element</keyword>
<keyword id="KW-0815">Transposition</keyword>
<dbReference type="EMBL" id="AE000516">
    <property type="protein sequence ID" value="AAK45615.1"/>
    <property type="molecule type" value="Genomic_DNA"/>
</dbReference>
<dbReference type="EMBL" id="AE000516">
    <property type="protein sequence ID" value="AAK48271.1"/>
    <property type="molecule type" value="Genomic_DNA"/>
</dbReference>
<dbReference type="PIR" id="E70775">
    <property type="entry name" value="E70775"/>
</dbReference>
<dbReference type="RefSeq" id="WP_003900758.1">
    <property type="nucleotide sequence ID" value="NZ_KK341227.1"/>
</dbReference>
<dbReference type="SMR" id="P9WKH6"/>
<dbReference type="KEGG" id="mtc:MT1353"/>
<dbReference type="KEGG" id="mtc:MT3905"/>
<dbReference type="PATRIC" id="fig|83331.31.peg.4202"/>
<dbReference type="HOGENOM" id="CLU_041900_0_1_11"/>
<dbReference type="Proteomes" id="UP000001020">
    <property type="component" value="Chromosome"/>
</dbReference>
<dbReference type="GO" id="GO:0003677">
    <property type="term" value="F:DNA binding"/>
    <property type="evidence" value="ECO:0007669"/>
    <property type="project" value="UniProtKB-KW"/>
</dbReference>
<dbReference type="GO" id="GO:0006310">
    <property type="term" value="P:DNA recombination"/>
    <property type="evidence" value="ECO:0007669"/>
    <property type="project" value="UniProtKB-KW"/>
</dbReference>
<dbReference type="GO" id="GO:0032196">
    <property type="term" value="P:transposition"/>
    <property type="evidence" value="ECO:0007669"/>
    <property type="project" value="UniProtKB-KW"/>
</dbReference>
<dbReference type="InterPro" id="IPR047951">
    <property type="entry name" value="Transpos_ISL3"/>
</dbReference>
<dbReference type="InterPro" id="IPR002560">
    <property type="entry name" value="Transposase_DDE"/>
</dbReference>
<dbReference type="InterPro" id="IPR032877">
    <property type="entry name" value="Transposase_HTH"/>
</dbReference>
<dbReference type="InterPro" id="IPR029261">
    <property type="entry name" value="Transposase_Znf"/>
</dbReference>
<dbReference type="NCBIfam" id="NF033550">
    <property type="entry name" value="transpos_ISL3"/>
    <property type="match status" value="1"/>
</dbReference>
<dbReference type="PANTHER" id="PTHR33498">
    <property type="entry name" value="TRANSPOSASE FOR INSERTION SEQUENCE ELEMENT IS1557"/>
    <property type="match status" value="1"/>
</dbReference>
<dbReference type="PANTHER" id="PTHR33498:SF1">
    <property type="entry name" value="TRANSPOSASE FOR INSERTION SEQUENCE ELEMENT IS1557"/>
    <property type="match status" value="1"/>
</dbReference>
<dbReference type="Pfam" id="PF01610">
    <property type="entry name" value="DDE_Tnp_ISL3"/>
    <property type="match status" value="1"/>
</dbReference>
<dbReference type="Pfam" id="PF13542">
    <property type="entry name" value="HTH_Tnp_ISL3"/>
    <property type="match status" value="1"/>
</dbReference>
<dbReference type="Pfam" id="PF14690">
    <property type="entry name" value="Zn_ribbon_ISL3"/>
    <property type="match status" value="1"/>
</dbReference>
<evidence type="ECO:0000256" key="1">
    <source>
        <dbReference type="SAM" id="MobiDB-lite"/>
    </source>
</evidence>
<evidence type="ECO:0000305" key="2"/>
<organism>
    <name type="scientific">Mycobacterium tuberculosis (strain CDC 1551 / Oshkosh)</name>
    <dbReference type="NCBI Taxonomy" id="83331"/>
    <lineage>
        <taxon>Bacteria</taxon>
        <taxon>Bacillati</taxon>
        <taxon>Actinomycetota</taxon>
        <taxon>Actinomycetes</taxon>
        <taxon>Mycobacteriales</taxon>
        <taxon>Mycobacteriaceae</taxon>
        <taxon>Mycobacterium</taxon>
        <taxon>Mycobacterium tuberculosis complex</taxon>
    </lineage>
</organism>
<sequence>MRNVRLFRALLGVDKRTVIEDIEFEEDDAGDGARVIARVRPRSAVLRRCGRCGRKASWYDRGAGLRQWRSLDWGTVEVFLEAEAPRVNCPTHGPTVVAVPWARHHAGHTYAFDDTVAWLAVACSKTAVCELMRIAWRTVGAIVARVWADTEKRIDRFANLRRIGIDEISYKRHHRYLTVVVDHDSGRLVWAAPGHDKATLGLFFDALGAERAAQITHVSADAADWIADVVTERCPDAIQCADPFHVVAWATEALDVERRRAWNDARAIARTEPKWGRGRPGKNAAPRPGRERARRLKGARYALWKNPEDLTERQSAKLAWIAKTDPRLYRAYLLKESLRHVFSVKGEEGKQALDRWISWAQRCRIPVFVELAARIKRHRVAIDAALDHGLSQGLIESTNTKIRLLTRIAFGFRSPQALIALAMLTLAGHRPTLPGRHNHPQISQ</sequence>